<gene>
    <name evidence="1" type="primary">glpE</name>
    <name type="ordered locus">ECDH10B_3599</name>
</gene>
<comment type="function">
    <text evidence="1">Transferase that catalyzes the transfer of sulfur from thiosulfate to thiophilic acceptors such as cyanide or dithiols. May function in a CysM-independent thiosulfate assimilation pathway by catalyzing the conversion of thiosulfate to sulfite, which can then be used for L-cysteine biosynthesis.</text>
</comment>
<comment type="catalytic activity">
    <reaction evidence="1">
        <text>thiosulfate + hydrogen cyanide = thiocyanate + sulfite + 2 H(+)</text>
        <dbReference type="Rhea" id="RHEA:16881"/>
        <dbReference type="ChEBI" id="CHEBI:15378"/>
        <dbReference type="ChEBI" id="CHEBI:17359"/>
        <dbReference type="ChEBI" id="CHEBI:18022"/>
        <dbReference type="ChEBI" id="CHEBI:18407"/>
        <dbReference type="ChEBI" id="CHEBI:33542"/>
        <dbReference type="EC" id="2.8.1.1"/>
    </reaction>
</comment>
<comment type="catalytic activity">
    <reaction evidence="1">
        <text>thiosulfate + [thioredoxin]-dithiol = [thioredoxin]-disulfide + hydrogen sulfide + sulfite + 2 H(+)</text>
        <dbReference type="Rhea" id="RHEA:83859"/>
        <dbReference type="Rhea" id="RHEA-COMP:10698"/>
        <dbReference type="Rhea" id="RHEA-COMP:10700"/>
        <dbReference type="ChEBI" id="CHEBI:15378"/>
        <dbReference type="ChEBI" id="CHEBI:17359"/>
        <dbReference type="ChEBI" id="CHEBI:29919"/>
        <dbReference type="ChEBI" id="CHEBI:29950"/>
        <dbReference type="ChEBI" id="CHEBI:33542"/>
        <dbReference type="ChEBI" id="CHEBI:50058"/>
    </reaction>
</comment>
<comment type="subcellular location">
    <subcellularLocation>
        <location evidence="1">Cytoplasm</location>
    </subcellularLocation>
</comment>
<comment type="similarity">
    <text evidence="1">Belongs to the GlpE family.</text>
</comment>
<dbReference type="EC" id="2.8.1.1" evidence="1"/>
<dbReference type="EMBL" id="CP000948">
    <property type="protein sequence ID" value="ACB04482.1"/>
    <property type="molecule type" value="Genomic_DNA"/>
</dbReference>
<dbReference type="RefSeq" id="WP_000371928.1">
    <property type="nucleotide sequence ID" value="NC_010473.1"/>
</dbReference>
<dbReference type="SMR" id="B1X770"/>
<dbReference type="GeneID" id="93778571"/>
<dbReference type="KEGG" id="ecd:ECDH10B_3599"/>
<dbReference type="HOGENOM" id="CLU_089574_14_0_6"/>
<dbReference type="GO" id="GO:0005737">
    <property type="term" value="C:cytoplasm"/>
    <property type="evidence" value="ECO:0007669"/>
    <property type="project" value="UniProtKB-SubCell"/>
</dbReference>
<dbReference type="GO" id="GO:0004792">
    <property type="term" value="F:thiosulfate-cyanide sulfurtransferase activity"/>
    <property type="evidence" value="ECO:0007669"/>
    <property type="project" value="UniProtKB-UniRule"/>
</dbReference>
<dbReference type="GO" id="GO:0006071">
    <property type="term" value="P:glycerol metabolic process"/>
    <property type="evidence" value="ECO:0007669"/>
    <property type="project" value="UniProtKB-UniRule"/>
</dbReference>
<dbReference type="CDD" id="cd01444">
    <property type="entry name" value="GlpE_ST"/>
    <property type="match status" value="1"/>
</dbReference>
<dbReference type="FunFam" id="3.40.250.10:FF:000007">
    <property type="entry name" value="Thiosulfate sulfurtransferase GlpE"/>
    <property type="match status" value="1"/>
</dbReference>
<dbReference type="Gene3D" id="3.40.250.10">
    <property type="entry name" value="Rhodanese-like domain"/>
    <property type="match status" value="1"/>
</dbReference>
<dbReference type="HAMAP" id="MF_01009">
    <property type="entry name" value="Thiosulf_sulfurtr"/>
    <property type="match status" value="1"/>
</dbReference>
<dbReference type="InterPro" id="IPR050229">
    <property type="entry name" value="GlpE_sulfurtransferase"/>
</dbReference>
<dbReference type="InterPro" id="IPR001763">
    <property type="entry name" value="Rhodanese-like_dom"/>
</dbReference>
<dbReference type="InterPro" id="IPR036873">
    <property type="entry name" value="Rhodanese-like_dom_sf"/>
</dbReference>
<dbReference type="InterPro" id="IPR023695">
    <property type="entry name" value="Thiosulf_sulfurTrfase"/>
</dbReference>
<dbReference type="NCBIfam" id="NF001195">
    <property type="entry name" value="PRK00162.1"/>
    <property type="match status" value="1"/>
</dbReference>
<dbReference type="PANTHER" id="PTHR43031">
    <property type="entry name" value="FAD-DEPENDENT OXIDOREDUCTASE"/>
    <property type="match status" value="1"/>
</dbReference>
<dbReference type="PANTHER" id="PTHR43031:SF6">
    <property type="entry name" value="THIOSULFATE SULFURTRANSFERASE GLPE"/>
    <property type="match status" value="1"/>
</dbReference>
<dbReference type="Pfam" id="PF00581">
    <property type="entry name" value="Rhodanese"/>
    <property type="match status" value="1"/>
</dbReference>
<dbReference type="SMART" id="SM00450">
    <property type="entry name" value="RHOD"/>
    <property type="match status" value="1"/>
</dbReference>
<dbReference type="SUPFAM" id="SSF52821">
    <property type="entry name" value="Rhodanese/Cell cycle control phosphatase"/>
    <property type="match status" value="1"/>
</dbReference>
<dbReference type="PROSITE" id="PS50206">
    <property type="entry name" value="RHODANESE_3"/>
    <property type="match status" value="1"/>
</dbReference>
<organism>
    <name type="scientific">Escherichia coli (strain K12 / DH10B)</name>
    <dbReference type="NCBI Taxonomy" id="316385"/>
    <lineage>
        <taxon>Bacteria</taxon>
        <taxon>Pseudomonadati</taxon>
        <taxon>Pseudomonadota</taxon>
        <taxon>Gammaproteobacteria</taxon>
        <taxon>Enterobacterales</taxon>
        <taxon>Enterobacteriaceae</taxon>
        <taxon>Escherichia</taxon>
    </lineage>
</organism>
<feature type="chain" id="PRO_1000134852" description="Thiosulfate sulfurtransferase GlpE">
    <location>
        <begin position="1"/>
        <end position="108"/>
    </location>
</feature>
<feature type="domain" description="Rhodanese" evidence="1">
    <location>
        <begin position="17"/>
        <end position="105"/>
    </location>
</feature>
<feature type="active site" description="Cysteine persulfide intermediate" evidence="1">
    <location>
        <position position="65"/>
    </location>
</feature>
<name>GLPE_ECODH</name>
<reference key="1">
    <citation type="journal article" date="2008" name="J. Bacteriol.">
        <title>The complete genome sequence of Escherichia coli DH10B: insights into the biology of a laboratory workhorse.</title>
        <authorList>
            <person name="Durfee T."/>
            <person name="Nelson R."/>
            <person name="Baldwin S."/>
            <person name="Plunkett G. III"/>
            <person name="Burland V."/>
            <person name="Mau B."/>
            <person name="Petrosino J.F."/>
            <person name="Qin X."/>
            <person name="Muzny D.M."/>
            <person name="Ayele M."/>
            <person name="Gibbs R.A."/>
            <person name="Csorgo B."/>
            <person name="Posfai G."/>
            <person name="Weinstock G.M."/>
            <person name="Blattner F.R."/>
        </authorList>
    </citation>
    <scope>NUCLEOTIDE SEQUENCE [LARGE SCALE GENOMIC DNA]</scope>
    <source>
        <strain>K12 / DH10B</strain>
    </source>
</reference>
<sequence length="108" mass="12082">MDQFECINVADAHQKLQEKEAVLVDIRDPQSFAMGHAVQAFHLTNDTLGAFMRDNDFDTPVMVMCYHGNSSKGAAQYLLQQGYDVVYSIDGGFEAWQRQFPAEVAYGA</sequence>
<keyword id="KW-0963">Cytoplasm</keyword>
<keyword id="KW-0808">Transferase</keyword>
<accession>B1X770</accession>
<protein>
    <recommendedName>
        <fullName evidence="1">Thiosulfate sulfurtransferase GlpE</fullName>
        <ecNumber evidence="1">2.8.1.1</ecNumber>
    </recommendedName>
</protein>
<evidence type="ECO:0000255" key="1">
    <source>
        <dbReference type="HAMAP-Rule" id="MF_01009"/>
    </source>
</evidence>
<proteinExistence type="inferred from homology"/>